<proteinExistence type="inferred from homology"/>
<protein>
    <recommendedName>
        <fullName>Cytochrome b</fullName>
    </recommendedName>
    <alternativeName>
        <fullName>Complex III subunit 3</fullName>
    </alternativeName>
    <alternativeName>
        <fullName>Complex III subunit III</fullName>
    </alternativeName>
    <alternativeName>
        <fullName>Cytochrome b-c1 complex subunit 3</fullName>
    </alternativeName>
    <alternativeName>
        <fullName>Ubiquinol-cytochrome-c reductase complex cytochrome b subunit</fullName>
    </alternativeName>
</protein>
<keyword id="KW-0249">Electron transport</keyword>
<keyword id="KW-0349">Heme</keyword>
<keyword id="KW-0408">Iron</keyword>
<keyword id="KW-0472">Membrane</keyword>
<keyword id="KW-0479">Metal-binding</keyword>
<keyword id="KW-0496">Mitochondrion</keyword>
<keyword id="KW-0999">Mitochondrion inner membrane</keyword>
<keyword id="KW-0679">Respiratory chain</keyword>
<keyword id="KW-0812">Transmembrane</keyword>
<keyword id="KW-1133">Transmembrane helix</keyword>
<keyword id="KW-0813">Transport</keyword>
<keyword id="KW-0830">Ubiquinone</keyword>
<geneLocation type="mitochondrion"/>
<name>CYB_VICFA</name>
<organism>
    <name type="scientific">Vicia faba</name>
    <name type="common">Broad bean</name>
    <name type="synonym">Faba vulgaris</name>
    <dbReference type="NCBI Taxonomy" id="3906"/>
    <lineage>
        <taxon>Eukaryota</taxon>
        <taxon>Viridiplantae</taxon>
        <taxon>Streptophyta</taxon>
        <taxon>Embryophyta</taxon>
        <taxon>Tracheophyta</taxon>
        <taxon>Spermatophyta</taxon>
        <taxon>Magnoliopsida</taxon>
        <taxon>eudicotyledons</taxon>
        <taxon>Gunneridae</taxon>
        <taxon>Pentapetalae</taxon>
        <taxon>rosids</taxon>
        <taxon>fabids</taxon>
        <taxon>Fabales</taxon>
        <taxon>Fabaceae</taxon>
        <taxon>Papilionoideae</taxon>
        <taxon>50 kb inversion clade</taxon>
        <taxon>NPAAA clade</taxon>
        <taxon>Hologalegina</taxon>
        <taxon>IRL clade</taxon>
        <taxon>Fabeae</taxon>
        <taxon>Vicia</taxon>
    </lineage>
</organism>
<feature type="chain" id="PRO_0000061716" description="Cytochrome b">
    <location>
        <begin position="1"/>
        <end position="392"/>
    </location>
</feature>
<feature type="transmembrane region" description="Helical" evidence="3">
    <location>
        <begin position="38"/>
        <end position="58"/>
    </location>
</feature>
<feature type="transmembrane region" description="Helical" evidence="3">
    <location>
        <begin position="82"/>
        <end position="104"/>
    </location>
</feature>
<feature type="transmembrane region" description="Helical" evidence="3">
    <location>
        <begin position="119"/>
        <end position="139"/>
    </location>
</feature>
<feature type="transmembrane region" description="Helical" evidence="3">
    <location>
        <begin position="185"/>
        <end position="205"/>
    </location>
</feature>
<feature type="transmembrane region" description="Helical" evidence="3">
    <location>
        <begin position="231"/>
        <end position="251"/>
    </location>
</feature>
<feature type="transmembrane region" description="Helical" evidence="3">
    <location>
        <begin position="295"/>
        <end position="315"/>
    </location>
</feature>
<feature type="transmembrane region" description="Helical" evidence="3">
    <location>
        <begin position="327"/>
        <end position="347"/>
    </location>
</feature>
<feature type="transmembrane region" description="Helical" evidence="3">
    <location>
        <begin position="354"/>
        <end position="373"/>
    </location>
</feature>
<feature type="binding site" description="axial binding residue" evidence="3">
    <location>
        <position position="88"/>
    </location>
    <ligand>
        <name>heme b</name>
        <dbReference type="ChEBI" id="CHEBI:60344"/>
        <label>b562</label>
    </ligand>
    <ligandPart>
        <name>Fe</name>
        <dbReference type="ChEBI" id="CHEBI:18248"/>
    </ligandPart>
</feature>
<feature type="binding site" description="axial binding residue" evidence="3">
    <location>
        <position position="102"/>
    </location>
    <ligand>
        <name>heme b</name>
        <dbReference type="ChEBI" id="CHEBI:60344"/>
        <label>b566</label>
    </ligand>
    <ligandPart>
        <name>Fe</name>
        <dbReference type="ChEBI" id="CHEBI:18248"/>
    </ligandPart>
</feature>
<feature type="binding site" description="axial binding residue" evidence="3">
    <location>
        <position position="189"/>
    </location>
    <ligand>
        <name>heme b</name>
        <dbReference type="ChEBI" id="CHEBI:60344"/>
        <label>b562</label>
    </ligand>
    <ligandPart>
        <name>Fe</name>
        <dbReference type="ChEBI" id="CHEBI:18248"/>
    </ligandPart>
</feature>
<feature type="binding site" description="axial binding residue" evidence="3">
    <location>
        <position position="203"/>
    </location>
    <ligand>
        <name>heme b</name>
        <dbReference type="ChEBI" id="CHEBI:60344"/>
        <label>b566</label>
    </ligand>
    <ligandPart>
        <name>Fe</name>
        <dbReference type="ChEBI" id="CHEBI:18248"/>
    </ligandPart>
</feature>
<feature type="binding site" evidence="2">
    <location>
        <position position="208"/>
    </location>
    <ligand>
        <name>a ubiquinone</name>
        <dbReference type="ChEBI" id="CHEBI:16389"/>
    </ligand>
</feature>
<dbReference type="EMBL" id="X07237">
    <property type="protein sequence ID" value="CAA30226.1"/>
    <property type="molecule type" value="Genomic_DNA"/>
</dbReference>
<dbReference type="PIR" id="S01221">
    <property type="entry name" value="CBVF"/>
</dbReference>
<dbReference type="SMR" id="P05718"/>
<dbReference type="EnsemblPlants" id="Vfaba.Hedin2.R1.2g013160.1">
    <property type="protein sequence ID" value="cds:Vfaba.Hedin2.R1.2g013160.1"/>
    <property type="gene ID" value="Vfaba.Hedin2.R1.2g013160"/>
</dbReference>
<dbReference type="Gramene" id="Vfaba.Hedin2.R1.2g013160.1">
    <property type="protein sequence ID" value="cds:Vfaba.Hedin2.R1.2g013160.1"/>
    <property type="gene ID" value="Vfaba.Hedin2.R1.2g013160"/>
</dbReference>
<dbReference type="OrthoDB" id="1917301at2759"/>
<dbReference type="GO" id="GO:0005743">
    <property type="term" value="C:mitochondrial inner membrane"/>
    <property type="evidence" value="ECO:0007669"/>
    <property type="project" value="UniProtKB-SubCell"/>
</dbReference>
<dbReference type="GO" id="GO:0045275">
    <property type="term" value="C:respiratory chain complex III"/>
    <property type="evidence" value="ECO:0007669"/>
    <property type="project" value="InterPro"/>
</dbReference>
<dbReference type="GO" id="GO:0046872">
    <property type="term" value="F:metal ion binding"/>
    <property type="evidence" value="ECO:0007669"/>
    <property type="project" value="UniProtKB-KW"/>
</dbReference>
<dbReference type="GO" id="GO:0008121">
    <property type="term" value="F:ubiquinol-cytochrome-c reductase activity"/>
    <property type="evidence" value="ECO:0007669"/>
    <property type="project" value="InterPro"/>
</dbReference>
<dbReference type="GO" id="GO:0006122">
    <property type="term" value="P:mitochondrial electron transport, ubiquinol to cytochrome c"/>
    <property type="evidence" value="ECO:0007669"/>
    <property type="project" value="TreeGrafter"/>
</dbReference>
<dbReference type="CDD" id="cd00290">
    <property type="entry name" value="cytochrome_b_C"/>
    <property type="match status" value="1"/>
</dbReference>
<dbReference type="CDD" id="cd00284">
    <property type="entry name" value="Cytochrome_b_N"/>
    <property type="match status" value="1"/>
</dbReference>
<dbReference type="FunFam" id="1.20.810.10:FF:000006">
    <property type="entry name" value="Cytochrome b"/>
    <property type="match status" value="1"/>
</dbReference>
<dbReference type="Gene3D" id="1.20.810.10">
    <property type="entry name" value="Cytochrome Bc1 Complex, Chain C"/>
    <property type="match status" value="1"/>
</dbReference>
<dbReference type="InterPro" id="IPR005798">
    <property type="entry name" value="Cyt_b/b6_C"/>
</dbReference>
<dbReference type="InterPro" id="IPR036150">
    <property type="entry name" value="Cyt_b/b6_C_sf"/>
</dbReference>
<dbReference type="InterPro" id="IPR005797">
    <property type="entry name" value="Cyt_b/b6_N"/>
</dbReference>
<dbReference type="InterPro" id="IPR027387">
    <property type="entry name" value="Cytb/b6-like_sf"/>
</dbReference>
<dbReference type="InterPro" id="IPR030689">
    <property type="entry name" value="Cytochrome_b"/>
</dbReference>
<dbReference type="InterPro" id="IPR048260">
    <property type="entry name" value="Cytochrome_b_C_euk/bac"/>
</dbReference>
<dbReference type="InterPro" id="IPR048259">
    <property type="entry name" value="Cytochrome_b_N_euk/bac"/>
</dbReference>
<dbReference type="InterPro" id="IPR016174">
    <property type="entry name" value="Di-haem_cyt_TM"/>
</dbReference>
<dbReference type="PANTHER" id="PTHR19271">
    <property type="entry name" value="CYTOCHROME B"/>
    <property type="match status" value="1"/>
</dbReference>
<dbReference type="PANTHER" id="PTHR19271:SF16">
    <property type="entry name" value="CYTOCHROME B"/>
    <property type="match status" value="1"/>
</dbReference>
<dbReference type="Pfam" id="PF00032">
    <property type="entry name" value="Cytochrom_B_C"/>
    <property type="match status" value="1"/>
</dbReference>
<dbReference type="Pfam" id="PF00033">
    <property type="entry name" value="Cytochrome_B"/>
    <property type="match status" value="1"/>
</dbReference>
<dbReference type="PIRSF" id="PIRSF038885">
    <property type="entry name" value="COB"/>
    <property type="match status" value="1"/>
</dbReference>
<dbReference type="SUPFAM" id="SSF81648">
    <property type="entry name" value="a domain/subunit of cytochrome bc1 complex (Ubiquinol-cytochrome c reductase)"/>
    <property type="match status" value="1"/>
</dbReference>
<dbReference type="SUPFAM" id="SSF81342">
    <property type="entry name" value="Transmembrane di-heme cytochromes"/>
    <property type="match status" value="1"/>
</dbReference>
<dbReference type="PROSITE" id="PS51003">
    <property type="entry name" value="CYTB_CTER"/>
    <property type="match status" value="1"/>
</dbReference>
<dbReference type="PROSITE" id="PS51002">
    <property type="entry name" value="CYTB_NTER"/>
    <property type="match status" value="1"/>
</dbReference>
<gene>
    <name type="primary">MT-CYB</name>
    <name type="synonym">COB</name>
    <name type="synonym">CYTB</name>
    <name type="synonym">MTCYB</name>
</gene>
<reference key="1">
    <citation type="journal article" date="1988" name="Nucleic Acids Res.">
        <title>Ribosomal protein S14 genes in broad bean mitochondrial DNA.</title>
        <authorList>
            <person name="Wahleithner J.A."/>
            <person name="Wolstenholme D.R."/>
        </authorList>
    </citation>
    <scope>NUCLEOTIDE SEQUENCE [GENOMIC DNA]</scope>
</reference>
<evidence type="ECO:0000250" key="1"/>
<evidence type="ECO:0000250" key="2">
    <source>
        <dbReference type="UniProtKB" id="P00157"/>
    </source>
</evidence>
<evidence type="ECO:0000250" key="3">
    <source>
        <dbReference type="UniProtKB" id="P00163"/>
    </source>
</evidence>
<evidence type="ECO:0000255" key="4">
    <source>
        <dbReference type="PROSITE-ProRule" id="PRU00967"/>
    </source>
</evidence>
<evidence type="ECO:0000255" key="5">
    <source>
        <dbReference type="PROSITE-ProRule" id="PRU00968"/>
    </source>
</evidence>
<sequence>MTIRNQRLSLLKQPISSTLNQHLIDYPTPSNLSYWWGFGSLAGICLVIQIVTGVFLAMHYTPHVDLAFNSVEHVMRDVEGGWLLRYMHANGASMFLIVVHLHIFRGLYHASYSSPREFVRCLGVVIFLLMIVTAFTGYVPPWGQMSFWGATVITSLASAIPVVGDTIVTWLWGGFSVDNATLNRFFSLHHLLPFILVGASLLHLAALHQYGSNNPLGVHSEMDQISFYPYFYVKDLVGWVAFAIFFSIWIFYAPNVLGHPDNYIPANPMPTPPHIVPEWYFLPIHAILRSIPDKSGGVAAIAPVFICLLALPFFKSMYVRSSSFRPIHQGIFWLLLADRLLLGWIGCQPVEAPFVTIGQIPPFVFFLFFAITPIPGRVGRGIPNSYTDETDQ</sequence>
<comment type="function">
    <text evidence="3">Component of the ubiquinol-cytochrome c reductase complex (complex III or cytochrome b-c1 complex) that is part of the mitochondrial respiratory chain. The b-c1 complex mediates electron transfer from ubiquinol to cytochrome c. Contributes to the generation of a proton gradient across the mitochondrial membrane that is then used for ATP synthesis.</text>
</comment>
<comment type="cofactor">
    <cofactor evidence="3">
        <name>heme b</name>
        <dbReference type="ChEBI" id="CHEBI:60344"/>
    </cofactor>
    <text evidence="3">Binds 2 heme b groups non-covalently.</text>
</comment>
<comment type="subunit">
    <text evidence="1">The main subunits of complex b-c1 are: cytochrome b, cytochrome c1 and the Rieske protein.</text>
</comment>
<comment type="subcellular location">
    <subcellularLocation>
        <location evidence="3">Mitochondrion inner membrane</location>
        <topology evidence="3">Multi-pass membrane protein</topology>
    </subcellularLocation>
</comment>
<comment type="miscellaneous">
    <text evidence="1">Heme 1 (or BL or b562) is low-potential and absorbs at about 562 nm, and heme 2 (or BH or b566) is high-potential and absorbs at about 566 nm.</text>
</comment>
<comment type="similarity">
    <text evidence="4 5">Belongs to the cytochrome b family.</text>
</comment>
<comment type="caution">
    <text evidence="3">The protein contains only eight transmembrane helices, not nine as predicted by bioinformatics tools.</text>
</comment>
<accession>P05718</accession>